<gene>
    <name evidence="1" type="primary">mgsA</name>
    <name type="ordered locus">VIBHAR_06121</name>
</gene>
<accession>A7N2T8</accession>
<name>MGSA_VIBC1</name>
<sequence length="151" mass="16822">MQKTTRTMPAHKHVALVAHDNCKPELLRWVKENKEKLQSHFLYATGTTGHMLSKETGLAIKSMISGPMGGDQQLGALISEGNIDVLVFFWDPLNAVPHDPDVKALLRIASVWNIPVATNRATAKFLFNSPLIDQEVDIEVPDYDAYLAERT</sequence>
<dbReference type="EC" id="4.2.3.3" evidence="1"/>
<dbReference type="EMBL" id="CP000790">
    <property type="protein sequence ID" value="ABU74014.1"/>
    <property type="molecule type" value="Genomic_DNA"/>
</dbReference>
<dbReference type="RefSeq" id="WP_005431754.1">
    <property type="nucleotide sequence ID" value="NC_022270.1"/>
</dbReference>
<dbReference type="SMR" id="A7N2T8"/>
<dbReference type="KEGG" id="vha:VIBHAR_06121"/>
<dbReference type="PATRIC" id="fig|338187.25.peg.4202"/>
<dbReference type="Proteomes" id="UP000008152">
    <property type="component" value="Chromosome II"/>
</dbReference>
<dbReference type="GO" id="GO:0005829">
    <property type="term" value="C:cytosol"/>
    <property type="evidence" value="ECO:0007669"/>
    <property type="project" value="TreeGrafter"/>
</dbReference>
<dbReference type="GO" id="GO:0008929">
    <property type="term" value="F:methylglyoxal synthase activity"/>
    <property type="evidence" value="ECO:0007669"/>
    <property type="project" value="UniProtKB-UniRule"/>
</dbReference>
<dbReference type="GO" id="GO:0019242">
    <property type="term" value="P:methylglyoxal biosynthetic process"/>
    <property type="evidence" value="ECO:0007669"/>
    <property type="project" value="UniProtKB-UniRule"/>
</dbReference>
<dbReference type="CDD" id="cd01422">
    <property type="entry name" value="MGS"/>
    <property type="match status" value="1"/>
</dbReference>
<dbReference type="FunFam" id="3.40.50.1380:FF:000002">
    <property type="entry name" value="Methylglyoxal synthase"/>
    <property type="match status" value="1"/>
</dbReference>
<dbReference type="Gene3D" id="3.40.50.1380">
    <property type="entry name" value="Methylglyoxal synthase-like domain"/>
    <property type="match status" value="1"/>
</dbReference>
<dbReference type="HAMAP" id="MF_00549">
    <property type="entry name" value="Methylglyoxal_synth"/>
    <property type="match status" value="1"/>
</dbReference>
<dbReference type="InterPro" id="IPR004363">
    <property type="entry name" value="Methylgl_synth"/>
</dbReference>
<dbReference type="InterPro" id="IPR018148">
    <property type="entry name" value="Methylglyoxal_synth_AS"/>
</dbReference>
<dbReference type="InterPro" id="IPR011607">
    <property type="entry name" value="MGS-like_dom"/>
</dbReference>
<dbReference type="InterPro" id="IPR036914">
    <property type="entry name" value="MGS-like_dom_sf"/>
</dbReference>
<dbReference type="NCBIfam" id="TIGR00160">
    <property type="entry name" value="MGSA"/>
    <property type="match status" value="1"/>
</dbReference>
<dbReference type="NCBIfam" id="NF003559">
    <property type="entry name" value="PRK05234.1"/>
    <property type="match status" value="1"/>
</dbReference>
<dbReference type="PANTHER" id="PTHR30492">
    <property type="entry name" value="METHYLGLYOXAL SYNTHASE"/>
    <property type="match status" value="1"/>
</dbReference>
<dbReference type="PANTHER" id="PTHR30492:SF0">
    <property type="entry name" value="METHYLGLYOXAL SYNTHASE"/>
    <property type="match status" value="1"/>
</dbReference>
<dbReference type="Pfam" id="PF02142">
    <property type="entry name" value="MGS"/>
    <property type="match status" value="1"/>
</dbReference>
<dbReference type="PIRSF" id="PIRSF006614">
    <property type="entry name" value="Methylglyox_syn"/>
    <property type="match status" value="1"/>
</dbReference>
<dbReference type="SMART" id="SM00851">
    <property type="entry name" value="MGS"/>
    <property type="match status" value="1"/>
</dbReference>
<dbReference type="SUPFAM" id="SSF52335">
    <property type="entry name" value="Methylglyoxal synthase-like"/>
    <property type="match status" value="1"/>
</dbReference>
<dbReference type="PROSITE" id="PS01335">
    <property type="entry name" value="METHYLGLYOXAL_SYNTH"/>
    <property type="match status" value="1"/>
</dbReference>
<dbReference type="PROSITE" id="PS51855">
    <property type="entry name" value="MGS"/>
    <property type="match status" value="1"/>
</dbReference>
<keyword id="KW-0456">Lyase</keyword>
<organism>
    <name type="scientific">Vibrio campbellii (strain ATCC BAA-1116)</name>
    <dbReference type="NCBI Taxonomy" id="2902295"/>
    <lineage>
        <taxon>Bacteria</taxon>
        <taxon>Pseudomonadati</taxon>
        <taxon>Pseudomonadota</taxon>
        <taxon>Gammaproteobacteria</taxon>
        <taxon>Vibrionales</taxon>
        <taxon>Vibrionaceae</taxon>
        <taxon>Vibrio</taxon>
    </lineage>
</organism>
<protein>
    <recommendedName>
        <fullName evidence="1">Methylglyoxal synthase</fullName>
        <shortName evidence="1">MGS</shortName>
        <ecNumber evidence="1">4.2.3.3</ecNumber>
    </recommendedName>
</protein>
<comment type="function">
    <text evidence="1">Catalyzes the formation of methylglyoxal from dihydroxyacetone phosphate.</text>
</comment>
<comment type="catalytic activity">
    <reaction evidence="1">
        <text>dihydroxyacetone phosphate = methylglyoxal + phosphate</text>
        <dbReference type="Rhea" id="RHEA:17937"/>
        <dbReference type="ChEBI" id="CHEBI:17158"/>
        <dbReference type="ChEBI" id="CHEBI:43474"/>
        <dbReference type="ChEBI" id="CHEBI:57642"/>
        <dbReference type="EC" id="4.2.3.3"/>
    </reaction>
</comment>
<comment type="similarity">
    <text evidence="1">Belongs to the methylglyoxal synthase family.</text>
</comment>
<proteinExistence type="inferred from homology"/>
<evidence type="ECO:0000255" key="1">
    <source>
        <dbReference type="HAMAP-Rule" id="MF_00549"/>
    </source>
</evidence>
<reference key="1">
    <citation type="submission" date="2007-08" db="EMBL/GenBank/DDBJ databases">
        <authorList>
            <consortium name="The Vibrio harveyi Genome Sequencing Project"/>
            <person name="Bassler B."/>
            <person name="Clifton S.W."/>
            <person name="Fulton L."/>
            <person name="Delehaunty K."/>
            <person name="Fronick C."/>
            <person name="Harrison M."/>
            <person name="Markivic C."/>
            <person name="Fulton R."/>
            <person name="Tin-Wollam A.-M."/>
            <person name="Shah N."/>
            <person name="Pepin K."/>
            <person name="Nash W."/>
            <person name="Thiruvilangam P."/>
            <person name="Bhonagiri V."/>
            <person name="Waters C."/>
            <person name="Tu K.C."/>
            <person name="Irgon J."/>
            <person name="Wilson R.K."/>
        </authorList>
    </citation>
    <scope>NUCLEOTIDE SEQUENCE [LARGE SCALE GENOMIC DNA]</scope>
    <source>
        <strain>ATCC BAA-1116 / BB120</strain>
    </source>
</reference>
<feature type="chain" id="PRO_1000017832" description="Methylglyoxal synthase">
    <location>
        <begin position="1"/>
        <end position="151"/>
    </location>
</feature>
<feature type="domain" description="MGS-like" evidence="1">
    <location>
        <begin position="6"/>
        <end position="151"/>
    </location>
</feature>
<feature type="active site" description="Proton donor/acceptor" evidence="1">
    <location>
        <position position="71"/>
    </location>
</feature>
<feature type="binding site" evidence="1">
    <location>
        <position position="19"/>
    </location>
    <ligand>
        <name>substrate</name>
    </ligand>
</feature>
<feature type="binding site" evidence="1">
    <location>
        <position position="23"/>
    </location>
    <ligand>
        <name>substrate</name>
    </ligand>
</feature>
<feature type="binding site" evidence="1">
    <location>
        <begin position="45"/>
        <end position="48"/>
    </location>
    <ligand>
        <name>substrate</name>
    </ligand>
</feature>
<feature type="binding site" evidence="1">
    <location>
        <begin position="65"/>
        <end position="66"/>
    </location>
    <ligand>
        <name>substrate</name>
    </ligand>
</feature>
<feature type="binding site" evidence="1">
    <location>
        <position position="98"/>
    </location>
    <ligand>
        <name>substrate</name>
    </ligand>
</feature>